<proteinExistence type="predicted"/>
<sequence length="227" mass="26248">MEQIRPFSDNYLDRLRTVEEDDYNDWEGSSDTKTLYSSVSDSKIGHKKSFHKDGKGLFKTLRNFLSLKTNKVPKNRKFSLLKGSKCNNVEIKVFIRNNDKQSNVHNFKGKDSIHEAWSQYLIFDSMGLSPLIHISGEDKYKVLCLFSIWRRKLGKCSIFTVHDPDIQKKIKSILSYLWELSNTNDPPHVIVWHTAKGTNVMTMGPLGLKDEDLWNYANERSNLNGTT</sequence>
<keyword id="KW-1185">Reference proteome</keyword>
<reference key="1">
    <citation type="journal article" date="2002" name="Nature">
        <title>The genome sequence of Schizosaccharomyces pombe.</title>
        <authorList>
            <person name="Wood V."/>
            <person name="Gwilliam R."/>
            <person name="Rajandream M.A."/>
            <person name="Lyne M.H."/>
            <person name="Lyne R."/>
            <person name="Stewart A."/>
            <person name="Sgouros J.G."/>
            <person name="Peat N."/>
            <person name="Hayles J."/>
            <person name="Baker S.G."/>
            <person name="Basham D."/>
            <person name="Bowman S."/>
            <person name="Brooks K."/>
            <person name="Brown D."/>
            <person name="Brown S."/>
            <person name="Chillingworth T."/>
            <person name="Churcher C.M."/>
            <person name="Collins M."/>
            <person name="Connor R."/>
            <person name="Cronin A."/>
            <person name="Davis P."/>
            <person name="Feltwell T."/>
            <person name="Fraser A."/>
            <person name="Gentles S."/>
            <person name="Goble A."/>
            <person name="Hamlin N."/>
            <person name="Harris D.E."/>
            <person name="Hidalgo J."/>
            <person name="Hodgson G."/>
            <person name="Holroyd S."/>
            <person name="Hornsby T."/>
            <person name="Howarth S."/>
            <person name="Huckle E.J."/>
            <person name="Hunt S."/>
            <person name="Jagels K."/>
            <person name="James K.D."/>
            <person name="Jones L."/>
            <person name="Jones M."/>
            <person name="Leather S."/>
            <person name="McDonald S."/>
            <person name="McLean J."/>
            <person name="Mooney P."/>
            <person name="Moule S."/>
            <person name="Mungall K.L."/>
            <person name="Murphy L.D."/>
            <person name="Niblett D."/>
            <person name="Odell C."/>
            <person name="Oliver K."/>
            <person name="O'Neil S."/>
            <person name="Pearson D."/>
            <person name="Quail M.A."/>
            <person name="Rabbinowitsch E."/>
            <person name="Rutherford K.M."/>
            <person name="Rutter S."/>
            <person name="Saunders D."/>
            <person name="Seeger K."/>
            <person name="Sharp S."/>
            <person name="Skelton J."/>
            <person name="Simmonds M.N."/>
            <person name="Squares R."/>
            <person name="Squares S."/>
            <person name="Stevens K."/>
            <person name="Taylor K."/>
            <person name="Taylor R.G."/>
            <person name="Tivey A."/>
            <person name="Walsh S.V."/>
            <person name="Warren T."/>
            <person name="Whitehead S."/>
            <person name="Woodward J.R."/>
            <person name="Volckaert G."/>
            <person name="Aert R."/>
            <person name="Robben J."/>
            <person name="Grymonprez B."/>
            <person name="Weltjens I."/>
            <person name="Vanstreels E."/>
            <person name="Rieger M."/>
            <person name="Schaefer M."/>
            <person name="Mueller-Auer S."/>
            <person name="Gabel C."/>
            <person name="Fuchs M."/>
            <person name="Duesterhoeft A."/>
            <person name="Fritzc C."/>
            <person name="Holzer E."/>
            <person name="Moestl D."/>
            <person name="Hilbert H."/>
            <person name="Borzym K."/>
            <person name="Langer I."/>
            <person name="Beck A."/>
            <person name="Lehrach H."/>
            <person name="Reinhardt R."/>
            <person name="Pohl T.M."/>
            <person name="Eger P."/>
            <person name="Zimmermann W."/>
            <person name="Wedler H."/>
            <person name="Wambutt R."/>
            <person name="Purnelle B."/>
            <person name="Goffeau A."/>
            <person name="Cadieu E."/>
            <person name="Dreano S."/>
            <person name="Gloux S."/>
            <person name="Lelaure V."/>
            <person name="Mottier S."/>
            <person name="Galibert F."/>
            <person name="Aves S.J."/>
            <person name="Xiang Z."/>
            <person name="Hunt C."/>
            <person name="Moore K."/>
            <person name="Hurst S.M."/>
            <person name="Lucas M."/>
            <person name="Rochet M."/>
            <person name="Gaillardin C."/>
            <person name="Tallada V.A."/>
            <person name="Garzon A."/>
            <person name="Thode G."/>
            <person name="Daga R.R."/>
            <person name="Cruzado L."/>
            <person name="Jimenez J."/>
            <person name="Sanchez M."/>
            <person name="del Rey F."/>
            <person name="Benito J."/>
            <person name="Dominguez A."/>
            <person name="Revuelta J.L."/>
            <person name="Moreno S."/>
            <person name="Armstrong J."/>
            <person name="Forsburg S.L."/>
            <person name="Cerutti L."/>
            <person name="Lowe T."/>
            <person name="McCombie W.R."/>
            <person name="Paulsen I."/>
            <person name="Potashkin J."/>
            <person name="Shpakovski G.V."/>
            <person name="Ussery D."/>
            <person name="Barrell B.G."/>
            <person name="Nurse P."/>
        </authorList>
    </citation>
    <scope>NUCLEOTIDE SEQUENCE [LARGE SCALE GENOMIC DNA]</scope>
    <source>
        <strain>972 / ATCC 24843</strain>
    </source>
</reference>
<gene>
    <name type="ORF">SPAC15F9.01c</name>
</gene>
<accession>Q10098</accession>
<dbReference type="EMBL" id="CU329670">
    <property type="protein sequence ID" value="CAA92378.1"/>
    <property type="molecule type" value="Genomic_DNA"/>
</dbReference>
<dbReference type="PIR" id="T37726">
    <property type="entry name" value="T37726"/>
</dbReference>
<dbReference type="STRING" id="284812.Q10098"/>
<dbReference type="PaxDb" id="4896-SPAC15F9.01c.1"/>
<dbReference type="EnsemblFungi" id="SPAC15F9.01c.1">
    <property type="protein sequence ID" value="SPAC15F9.01c.1:pep"/>
    <property type="gene ID" value="SPAC15F9.01c"/>
</dbReference>
<dbReference type="KEGG" id="spo:2542752"/>
<dbReference type="PomBase" id="SPAC15F9.01c"/>
<dbReference type="VEuPathDB" id="FungiDB:SPAC15F9.01c"/>
<dbReference type="HOGENOM" id="CLU_1220308_0_0_1"/>
<dbReference type="InParanoid" id="Q10098"/>
<dbReference type="PRO" id="PR:Q10098"/>
<dbReference type="Proteomes" id="UP000002485">
    <property type="component" value="Chromosome I"/>
</dbReference>
<dbReference type="GO" id="GO:0032153">
    <property type="term" value="C:cell division site"/>
    <property type="evidence" value="ECO:0007005"/>
    <property type="project" value="PomBase"/>
</dbReference>
<dbReference type="GO" id="GO:0051286">
    <property type="term" value="C:cell tip"/>
    <property type="evidence" value="ECO:0007005"/>
    <property type="project" value="PomBase"/>
</dbReference>
<dbReference type="GO" id="GO:0055105">
    <property type="term" value="F:ubiquitin-protein transferase inhibitor activity"/>
    <property type="evidence" value="ECO:0000250"/>
    <property type="project" value="PomBase"/>
</dbReference>
<dbReference type="GO" id="GO:0043161">
    <property type="term" value="P:proteasome-mediated ubiquitin-dependent protein catabolic process"/>
    <property type="evidence" value="ECO:0000250"/>
    <property type="project" value="PomBase"/>
</dbReference>
<organism>
    <name type="scientific">Schizosaccharomyces pombe (strain 972 / ATCC 24843)</name>
    <name type="common">Fission yeast</name>
    <dbReference type="NCBI Taxonomy" id="284812"/>
    <lineage>
        <taxon>Eukaryota</taxon>
        <taxon>Fungi</taxon>
        <taxon>Dikarya</taxon>
        <taxon>Ascomycota</taxon>
        <taxon>Taphrinomycotina</taxon>
        <taxon>Schizosaccharomycetes</taxon>
        <taxon>Schizosaccharomycetales</taxon>
        <taxon>Schizosaccharomycetaceae</taxon>
        <taxon>Schizosaccharomyces</taxon>
    </lineage>
</organism>
<name>YAP1_SCHPO</name>
<feature type="chain" id="PRO_0000116456" description="Uncharacterized protein C15F9.01c">
    <location>
        <begin position="1"/>
        <end position="227"/>
    </location>
</feature>
<protein>
    <recommendedName>
        <fullName>Uncharacterized protein C15F9.01c</fullName>
    </recommendedName>
</protein>